<comment type="function">
    <text evidence="1">Catalyzes the formation of 6,7-dimethyl-8-ribityllumazine by condensation of 5-amino-6-(D-ribitylamino)uracil with 3,4-dihydroxy-2-butanone 4-phosphate. This is the penultimate step in the biosynthesis of riboflavin.</text>
</comment>
<comment type="catalytic activity">
    <reaction evidence="1">
        <text>(2S)-2-hydroxy-3-oxobutyl phosphate + 5-amino-6-(D-ribitylamino)uracil = 6,7-dimethyl-8-(1-D-ribityl)lumazine + phosphate + 2 H2O + H(+)</text>
        <dbReference type="Rhea" id="RHEA:26152"/>
        <dbReference type="ChEBI" id="CHEBI:15377"/>
        <dbReference type="ChEBI" id="CHEBI:15378"/>
        <dbReference type="ChEBI" id="CHEBI:15934"/>
        <dbReference type="ChEBI" id="CHEBI:43474"/>
        <dbReference type="ChEBI" id="CHEBI:58201"/>
        <dbReference type="ChEBI" id="CHEBI:58830"/>
        <dbReference type="EC" id="2.5.1.78"/>
    </reaction>
</comment>
<comment type="pathway">
    <text evidence="1">Cofactor biosynthesis; riboflavin biosynthesis; riboflavin from 2-hydroxy-3-oxobutyl phosphate and 5-amino-6-(D-ribitylamino)uracil: step 1/2.</text>
</comment>
<comment type="similarity">
    <text evidence="1">Belongs to the DMRL synthase family.</text>
</comment>
<keyword id="KW-0686">Riboflavin biosynthesis</keyword>
<keyword id="KW-0808">Transferase</keyword>
<protein>
    <recommendedName>
        <fullName evidence="1">6,7-dimethyl-8-ribityllumazine synthase</fullName>
        <shortName evidence="1">DMRL synthase</shortName>
        <shortName evidence="1">LS</shortName>
        <shortName evidence="1">Lumazine synthase</shortName>
        <ecNumber evidence="1">2.5.1.78</ecNumber>
    </recommendedName>
</protein>
<sequence length="154" mass="16525">MTVFEGNLTTGNAKYGIVVARFNEFINAKLLAGALDALKRHGVQEEQIDIAWVPGAFEIPLIAQKMASSDKYDAIICLGTVIRGSTSHYDFVCSEVSKGIAHVSLNSNIPVMFGVLTTENIEQAIERSGTKAGNKGFEVAVGAIEMVDLMAKMS</sequence>
<dbReference type="EC" id="2.5.1.78" evidence="1"/>
<dbReference type="EMBL" id="AM406671">
    <property type="protein sequence ID" value="CAL98105.1"/>
    <property type="molecule type" value="Genomic_DNA"/>
</dbReference>
<dbReference type="RefSeq" id="WP_011835371.1">
    <property type="nucleotide sequence ID" value="NC_009004.1"/>
</dbReference>
<dbReference type="SMR" id="A2RLD8"/>
<dbReference type="STRING" id="416870.llmg_1529"/>
<dbReference type="GeneID" id="61109293"/>
<dbReference type="KEGG" id="llm:llmg_1529"/>
<dbReference type="eggNOG" id="COG0054">
    <property type="taxonomic scope" value="Bacteria"/>
</dbReference>
<dbReference type="HOGENOM" id="CLU_089358_1_1_9"/>
<dbReference type="OrthoDB" id="9809709at2"/>
<dbReference type="PhylomeDB" id="A2RLD8"/>
<dbReference type="UniPathway" id="UPA00275">
    <property type="reaction ID" value="UER00404"/>
</dbReference>
<dbReference type="Proteomes" id="UP000000364">
    <property type="component" value="Chromosome"/>
</dbReference>
<dbReference type="GO" id="GO:0005829">
    <property type="term" value="C:cytosol"/>
    <property type="evidence" value="ECO:0007669"/>
    <property type="project" value="TreeGrafter"/>
</dbReference>
<dbReference type="GO" id="GO:0009349">
    <property type="term" value="C:riboflavin synthase complex"/>
    <property type="evidence" value="ECO:0007669"/>
    <property type="project" value="InterPro"/>
</dbReference>
<dbReference type="GO" id="GO:0000906">
    <property type="term" value="F:6,7-dimethyl-8-ribityllumazine synthase activity"/>
    <property type="evidence" value="ECO:0007669"/>
    <property type="project" value="UniProtKB-UniRule"/>
</dbReference>
<dbReference type="GO" id="GO:0009231">
    <property type="term" value="P:riboflavin biosynthetic process"/>
    <property type="evidence" value="ECO:0007669"/>
    <property type="project" value="UniProtKB-UniRule"/>
</dbReference>
<dbReference type="CDD" id="cd09209">
    <property type="entry name" value="Lumazine_synthase-I"/>
    <property type="match status" value="1"/>
</dbReference>
<dbReference type="FunFam" id="3.40.50.960:FF:000001">
    <property type="entry name" value="6,7-dimethyl-8-ribityllumazine synthase"/>
    <property type="match status" value="1"/>
</dbReference>
<dbReference type="Gene3D" id="3.40.50.960">
    <property type="entry name" value="Lumazine/riboflavin synthase"/>
    <property type="match status" value="1"/>
</dbReference>
<dbReference type="HAMAP" id="MF_00178">
    <property type="entry name" value="Lumazine_synth"/>
    <property type="match status" value="1"/>
</dbReference>
<dbReference type="InterPro" id="IPR034964">
    <property type="entry name" value="LS"/>
</dbReference>
<dbReference type="InterPro" id="IPR002180">
    <property type="entry name" value="LS/RS"/>
</dbReference>
<dbReference type="InterPro" id="IPR036467">
    <property type="entry name" value="LS/RS_sf"/>
</dbReference>
<dbReference type="NCBIfam" id="TIGR00114">
    <property type="entry name" value="lumazine-synth"/>
    <property type="match status" value="1"/>
</dbReference>
<dbReference type="NCBIfam" id="NF000812">
    <property type="entry name" value="PRK00061.1-4"/>
    <property type="match status" value="1"/>
</dbReference>
<dbReference type="PANTHER" id="PTHR21058:SF0">
    <property type="entry name" value="6,7-DIMETHYL-8-RIBITYLLUMAZINE SYNTHASE"/>
    <property type="match status" value="1"/>
</dbReference>
<dbReference type="PANTHER" id="PTHR21058">
    <property type="entry name" value="6,7-DIMETHYL-8-RIBITYLLUMAZINE SYNTHASE DMRL SYNTHASE LUMAZINE SYNTHASE"/>
    <property type="match status" value="1"/>
</dbReference>
<dbReference type="Pfam" id="PF00885">
    <property type="entry name" value="DMRL_synthase"/>
    <property type="match status" value="1"/>
</dbReference>
<dbReference type="SUPFAM" id="SSF52121">
    <property type="entry name" value="Lumazine synthase"/>
    <property type="match status" value="1"/>
</dbReference>
<name>RISB_LACLM</name>
<organism>
    <name type="scientific">Lactococcus lactis subsp. cremoris (strain MG1363)</name>
    <dbReference type="NCBI Taxonomy" id="416870"/>
    <lineage>
        <taxon>Bacteria</taxon>
        <taxon>Bacillati</taxon>
        <taxon>Bacillota</taxon>
        <taxon>Bacilli</taxon>
        <taxon>Lactobacillales</taxon>
        <taxon>Streptococcaceae</taxon>
        <taxon>Lactococcus</taxon>
        <taxon>Lactococcus cremoris subsp. cremoris</taxon>
    </lineage>
</organism>
<feature type="chain" id="PRO_1000040438" description="6,7-dimethyl-8-ribityllumazine synthase">
    <location>
        <begin position="1"/>
        <end position="154"/>
    </location>
</feature>
<feature type="active site" description="Proton donor" evidence="1">
    <location>
        <position position="88"/>
    </location>
</feature>
<feature type="binding site" evidence="1">
    <location>
        <position position="22"/>
    </location>
    <ligand>
        <name>5-amino-6-(D-ribitylamino)uracil</name>
        <dbReference type="ChEBI" id="CHEBI:15934"/>
    </ligand>
</feature>
<feature type="binding site" evidence="1">
    <location>
        <begin position="56"/>
        <end position="58"/>
    </location>
    <ligand>
        <name>5-amino-6-(D-ribitylamino)uracil</name>
        <dbReference type="ChEBI" id="CHEBI:15934"/>
    </ligand>
</feature>
<feature type="binding site" evidence="1">
    <location>
        <begin position="80"/>
        <end position="82"/>
    </location>
    <ligand>
        <name>5-amino-6-(D-ribitylamino)uracil</name>
        <dbReference type="ChEBI" id="CHEBI:15934"/>
    </ligand>
</feature>
<feature type="binding site" evidence="1">
    <location>
        <begin position="85"/>
        <end position="86"/>
    </location>
    <ligand>
        <name>(2S)-2-hydroxy-3-oxobutyl phosphate</name>
        <dbReference type="ChEBI" id="CHEBI:58830"/>
    </ligand>
</feature>
<feature type="binding site" evidence="1">
    <location>
        <position position="113"/>
    </location>
    <ligand>
        <name>5-amino-6-(D-ribitylamino)uracil</name>
        <dbReference type="ChEBI" id="CHEBI:15934"/>
    </ligand>
</feature>
<feature type="binding site" evidence="1">
    <location>
        <position position="127"/>
    </location>
    <ligand>
        <name>(2S)-2-hydroxy-3-oxobutyl phosphate</name>
        <dbReference type="ChEBI" id="CHEBI:58830"/>
    </ligand>
</feature>
<gene>
    <name evidence="1" type="primary">ribH</name>
    <name type="ordered locus">llmg_1529</name>
</gene>
<evidence type="ECO:0000255" key="1">
    <source>
        <dbReference type="HAMAP-Rule" id="MF_00178"/>
    </source>
</evidence>
<proteinExistence type="inferred from homology"/>
<reference key="1">
    <citation type="journal article" date="2007" name="J. Bacteriol.">
        <title>The complete genome sequence of the lactic acid bacterial paradigm Lactococcus lactis subsp. cremoris MG1363.</title>
        <authorList>
            <person name="Wegmann U."/>
            <person name="O'Connell-Motherway M."/>
            <person name="Zomer A."/>
            <person name="Buist G."/>
            <person name="Shearman C."/>
            <person name="Canchaya C."/>
            <person name="Ventura M."/>
            <person name="Goesmann A."/>
            <person name="Gasson M.J."/>
            <person name="Kuipers O.P."/>
            <person name="van Sinderen D."/>
            <person name="Kok J."/>
        </authorList>
    </citation>
    <scope>NUCLEOTIDE SEQUENCE [LARGE SCALE GENOMIC DNA]</scope>
    <source>
        <strain>MG1363</strain>
    </source>
</reference>
<accession>A2RLD8</accession>